<keyword id="KW-0143">Chaperone</keyword>
<keyword id="KW-0963">Cytoplasm</keyword>
<keyword id="KW-0996">Nickel insertion</keyword>
<keyword id="KW-1185">Reference proteome</keyword>
<accession>Q2YQD7</accession>
<sequence>MTMRTATITEFSSSYRSLPGLLHLLQFGDSALPIGGFSFSNGLESAIQQNLVHDKETLREFTLTAMNQAATSDGIALLTAHRAARADDRGALQVIDKAVFERKLNEETRLMTVRMGRKLCELSASIIDDRLNRDWLECIKTAETPGTHPVSLGLAFAALDVDGRDAFGAQQYGVATTILGAALRLMRVSFMDTQKILLEATSTVAPAYEEIADAGIEDMASFAPMVDILAAVHVKGHVRMFMN</sequence>
<dbReference type="EMBL" id="AM040264">
    <property type="protein sequence ID" value="CAJ11336.1"/>
    <property type="molecule type" value="Genomic_DNA"/>
</dbReference>
<dbReference type="RefSeq" id="WP_002966883.1">
    <property type="nucleotide sequence ID" value="NZ_KN046823.1"/>
</dbReference>
<dbReference type="SMR" id="Q2YQD7"/>
<dbReference type="STRING" id="359391.BAB1_1380"/>
<dbReference type="KEGG" id="bmf:BAB1_1380"/>
<dbReference type="PATRIC" id="fig|359391.11.peg.830"/>
<dbReference type="HOGENOM" id="CLU_049215_4_0_5"/>
<dbReference type="PhylomeDB" id="Q2YQD7"/>
<dbReference type="Proteomes" id="UP000002719">
    <property type="component" value="Chromosome I"/>
</dbReference>
<dbReference type="GO" id="GO:0005737">
    <property type="term" value="C:cytoplasm"/>
    <property type="evidence" value="ECO:0007669"/>
    <property type="project" value="UniProtKB-SubCell"/>
</dbReference>
<dbReference type="GO" id="GO:0016151">
    <property type="term" value="F:nickel cation binding"/>
    <property type="evidence" value="ECO:0007669"/>
    <property type="project" value="UniProtKB-UniRule"/>
</dbReference>
<dbReference type="Gene3D" id="1.10.4190.10">
    <property type="entry name" value="Urease accessory protein UreF"/>
    <property type="match status" value="1"/>
</dbReference>
<dbReference type="HAMAP" id="MF_01385">
    <property type="entry name" value="UreF"/>
    <property type="match status" value="1"/>
</dbReference>
<dbReference type="InterPro" id="IPR002639">
    <property type="entry name" value="UreF"/>
</dbReference>
<dbReference type="InterPro" id="IPR038277">
    <property type="entry name" value="UreF_sf"/>
</dbReference>
<dbReference type="PANTHER" id="PTHR33620">
    <property type="entry name" value="UREASE ACCESSORY PROTEIN F"/>
    <property type="match status" value="1"/>
</dbReference>
<dbReference type="PANTHER" id="PTHR33620:SF1">
    <property type="entry name" value="UREASE ACCESSORY PROTEIN F"/>
    <property type="match status" value="1"/>
</dbReference>
<dbReference type="Pfam" id="PF01730">
    <property type="entry name" value="UreF"/>
    <property type="match status" value="1"/>
</dbReference>
<dbReference type="PIRSF" id="PIRSF009467">
    <property type="entry name" value="Ureas_acces_UreF"/>
    <property type="match status" value="1"/>
</dbReference>
<protein>
    <recommendedName>
        <fullName evidence="1">Urease accessory protein UreF 2</fullName>
    </recommendedName>
</protein>
<comment type="function">
    <text evidence="1">Required for maturation of urease via the functional incorporation of the urease nickel metallocenter.</text>
</comment>
<comment type="function">
    <text>Disrupting the ure2 operon has no effect on urease activity or pathogen survival in BALB/c mice when administered orally.</text>
</comment>
<comment type="subunit">
    <text evidence="1">UreD, UreF and UreG form a complex that acts as a GTP-hydrolysis-dependent molecular chaperone, activating the urease apoprotein by helping to assemble the nickel containing metallocenter of UreC. The UreE protein probably delivers the nickel.</text>
</comment>
<comment type="subcellular location">
    <subcellularLocation>
        <location evidence="1">Cytoplasm</location>
    </subcellularLocation>
</comment>
<comment type="similarity">
    <text evidence="1">Belongs to the UreF family.</text>
</comment>
<organism>
    <name type="scientific">Brucella abortus (strain 2308)</name>
    <dbReference type="NCBI Taxonomy" id="359391"/>
    <lineage>
        <taxon>Bacteria</taxon>
        <taxon>Pseudomonadati</taxon>
        <taxon>Pseudomonadota</taxon>
        <taxon>Alphaproteobacteria</taxon>
        <taxon>Hyphomicrobiales</taxon>
        <taxon>Brucellaceae</taxon>
        <taxon>Brucella/Ochrobactrum group</taxon>
        <taxon>Brucella</taxon>
    </lineage>
</organism>
<proteinExistence type="inferred from homology"/>
<reference key="1">
    <citation type="journal article" date="2005" name="Infect. Immun.">
        <title>Whole-genome analyses of speciation events in pathogenic Brucellae.</title>
        <authorList>
            <person name="Chain P.S."/>
            <person name="Comerci D.J."/>
            <person name="Tolmasky M.E."/>
            <person name="Larimer F.W."/>
            <person name="Malfatti S.A."/>
            <person name="Vergez L.M."/>
            <person name="Aguero F."/>
            <person name="Land M.L."/>
            <person name="Ugalde R.A."/>
            <person name="Garcia E."/>
        </authorList>
    </citation>
    <scope>NUCLEOTIDE SEQUENCE [LARGE SCALE GENOMIC DNA]</scope>
    <source>
        <strain>2308</strain>
    </source>
</reference>
<reference key="2">
    <citation type="journal article" date="2007" name="Infect. Immun.">
        <title>Characterization of the urease operon of Brucella abortus and assessment of its role in virulence of the bacterium.</title>
        <authorList>
            <person name="Sangari F.J."/>
            <person name="Seoane A."/>
            <person name="Rodriguez M.C."/>
            <person name="Aguero J."/>
            <person name="Garcia Lobo J.M."/>
        </authorList>
    </citation>
    <scope>LACK OF ROLE IN VIRULENCE</scope>
</reference>
<evidence type="ECO:0000255" key="1">
    <source>
        <dbReference type="HAMAP-Rule" id="MF_01385"/>
    </source>
</evidence>
<feature type="chain" id="PRO_0000344086" description="Urease accessory protein UreF 2">
    <location>
        <begin position="1"/>
        <end position="243"/>
    </location>
</feature>
<gene>
    <name evidence="1" type="primary">ureF2</name>
    <name type="ordered locus">BAB1_1380</name>
</gene>
<name>UREF2_BRUA2</name>